<keyword id="KW-0963">Cytoplasm</keyword>
<keyword id="KW-0460">Magnesium</keyword>
<keyword id="KW-0479">Metal-binding</keyword>
<keyword id="KW-0566">Pantothenate biosynthesis</keyword>
<keyword id="KW-1185">Reference proteome</keyword>
<keyword id="KW-0808">Transferase</keyword>
<accession>Q0B0P6</accession>
<evidence type="ECO:0000255" key="1">
    <source>
        <dbReference type="HAMAP-Rule" id="MF_00156"/>
    </source>
</evidence>
<proteinExistence type="inferred from homology"/>
<feature type="chain" id="PRO_0000297396" description="3-methyl-2-oxobutanoate hydroxymethyltransferase">
    <location>
        <begin position="1"/>
        <end position="276"/>
    </location>
</feature>
<feature type="active site" description="Proton acceptor" evidence="1">
    <location>
        <position position="183"/>
    </location>
</feature>
<feature type="binding site" evidence="1">
    <location>
        <begin position="45"/>
        <end position="46"/>
    </location>
    <ligand>
        <name>3-methyl-2-oxobutanoate</name>
        <dbReference type="ChEBI" id="CHEBI:11851"/>
    </ligand>
</feature>
<feature type="binding site" evidence="1">
    <location>
        <position position="45"/>
    </location>
    <ligand>
        <name>Mg(2+)</name>
        <dbReference type="ChEBI" id="CHEBI:18420"/>
    </ligand>
</feature>
<feature type="binding site" evidence="1">
    <location>
        <position position="84"/>
    </location>
    <ligand>
        <name>3-methyl-2-oxobutanoate</name>
        <dbReference type="ChEBI" id="CHEBI:11851"/>
    </ligand>
</feature>
<feature type="binding site" evidence="1">
    <location>
        <position position="84"/>
    </location>
    <ligand>
        <name>Mg(2+)</name>
        <dbReference type="ChEBI" id="CHEBI:18420"/>
    </ligand>
</feature>
<feature type="binding site" evidence="1">
    <location>
        <position position="114"/>
    </location>
    <ligand>
        <name>3-methyl-2-oxobutanoate</name>
        <dbReference type="ChEBI" id="CHEBI:11851"/>
    </ligand>
</feature>
<feature type="binding site" evidence="1">
    <location>
        <position position="116"/>
    </location>
    <ligand>
        <name>Mg(2+)</name>
        <dbReference type="ChEBI" id="CHEBI:18420"/>
    </ligand>
</feature>
<gene>
    <name evidence="1" type="primary">panB</name>
    <name type="ordered locus">Swol_0101</name>
</gene>
<organism>
    <name type="scientific">Syntrophomonas wolfei subsp. wolfei (strain DSM 2245B / Goettingen)</name>
    <dbReference type="NCBI Taxonomy" id="335541"/>
    <lineage>
        <taxon>Bacteria</taxon>
        <taxon>Bacillati</taxon>
        <taxon>Bacillota</taxon>
        <taxon>Clostridia</taxon>
        <taxon>Eubacteriales</taxon>
        <taxon>Syntrophomonadaceae</taxon>
        <taxon>Syntrophomonas</taxon>
    </lineage>
</organism>
<sequence length="276" mass="30234">MARVTVSVLKDKKKRKEKISMLTAYDYSLAGMVDEAGIDMILVGDSLGNVVLGYDNTLAVTMDDMIHHSKTVVRASKNAMVVGDMPFLSYHISKKEAVRNAGRFIQEAGCSAVKLEGGSERVDTVKAILDAQIPVMGHIGLTPQSVHQFGGFKVQGKDLETAKKLVEDARALDQAGVYCIVLECVPSELARRVTEEISVPTIGIGAGPYCDGQVLVINDMLGMFRGFTPKFVRKFANLEPLIMEALKNYKAEVEAGTFPAEEHCFTIKEEVLDRLY</sequence>
<dbReference type="EC" id="2.1.2.11" evidence="1"/>
<dbReference type="EMBL" id="CP000448">
    <property type="protein sequence ID" value="ABI67458.1"/>
    <property type="molecule type" value="Genomic_DNA"/>
</dbReference>
<dbReference type="RefSeq" id="WP_011639569.1">
    <property type="nucleotide sequence ID" value="NC_008346.1"/>
</dbReference>
<dbReference type="SMR" id="Q0B0P6"/>
<dbReference type="STRING" id="335541.Swol_0101"/>
<dbReference type="KEGG" id="swo:Swol_0101"/>
<dbReference type="eggNOG" id="COG0413">
    <property type="taxonomic scope" value="Bacteria"/>
</dbReference>
<dbReference type="HOGENOM" id="CLU_036645_1_0_9"/>
<dbReference type="OrthoDB" id="9781789at2"/>
<dbReference type="UniPathway" id="UPA00028">
    <property type="reaction ID" value="UER00003"/>
</dbReference>
<dbReference type="Proteomes" id="UP000001968">
    <property type="component" value="Chromosome"/>
</dbReference>
<dbReference type="GO" id="GO:0005737">
    <property type="term" value="C:cytoplasm"/>
    <property type="evidence" value="ECO:0007669"/>
    <property type="project" value="UniProtKB-SubCell"/>
</dbReference>
<dbReference type="GO" id="GO:0003864">
    <property type="term" value="F:3-methyl-2-oxobutanoate hydroxymethyltransferase activity"/>
    <property type="evidence" value="ECO:0007669"/>
    <property type="project" value="UniProtKB-UniRule"/>
</dbReference>
<dbReference type="GO" id="GO:0000287">
    <property type="term" value="F:magnesium ion binding"/>
    <property type="evidence" value="ECO:0007669"/>
    <property type="project" value="TreeGrafter"/>
</dbReference>
<dbReference type="GO" id="GO:0015940">
    <property type="term" value="P:pantothenate biosynthetic process"/>
    <property type="evidence" value="ECO:0007669"/>
    <property type="project" value="UniProtKB-UniRule"/>
</dbReference>
<dbReference type="CDD" id="cd06557">
    <property type="entry name" value="KPHMT-like"/>
    <property type="match status" value="1"/>
</dbReference>
<dbReference type="FunFam" id="3.20.20.60:FF:000003">
    <property type="entry name" value="3-methyl-2-oxobutanoate hydroxymethyltransferase"/>
    <property type="match status" value="1"/>
</dbReference>
<dbReference type="Gene3D" id="3.20.20.60">
    <property type="entry name" value="Phosphoenolpyruvate-binding domains"/>
    <property type="match status" value="1"/>
</dbReference>
<dbReference type="HAMAP" id="MF_00156">
    <property type="entry name" value="PanB"/>
    <property type="match status" value="1"/>
</dbReference>
<dbReference type="InterPro" id="IPR003700">
    <property type="entry name" value="Pantoate_hydroxy_MeTrfase"/>
</dbReference>
<dbReference type="InterPro" id="IPR015813">
    <property type="entry name" value="Pyrv/PenolPyrv_kinase-like_dom"/>
</dbReference>
<dbReference type="InterPro" id="IPR040442">
    <property type="entry name" value="Pyrv_kinase-like_dom_sf"/>
</dbReference>
<dbReference type="NCBIfam" id="TIGR00222">
    <property type="entry name" value="panB"/>
    <property type="match status" value="1"/>
</dbReference>
<dbReference type="NCBIfam" id="NF001452">
    <property type="entry name" value="PRK00311.1"/>
    <property type="match status" value="1"/>
</dbReference>
<dbReference type="PANTHER" id="PTHR20881">
    <property type="entry name" value="3-METHYL-2-OXOBUTANOATE HYDROXYMETHYLTRANSFERASE"/>
    <property type="match status" value="1"/>
</dbReference>
<dbReference type="PANTHER" id="PTHR20881:SF0">
    <property type="entry name" value="3-METHYL-2-OXOBUTANOATE HYDROXYMETHYLTRANSFERASE"/>
    <property type="match status" value="1"/>
</dbReference>
<dbReference type="Pfam" id="PF02548">
    <property type="entry name" value="Pantoate_transf"/>
    <property type="match status" value="1"/>
</dbReference>
<dbReference type="PIRSF" id="PIRSF000388">
    <property type="entry name" value="Pantoate_hydroxy_MeTrfase"/>
    <property type="match status" value="1"/>
</dbReference>
<dbReference type="SUPFAM" id="SSF51621">
    <property type="entry name" value="Phosphoenolpyruvate/pyruvate domain"/>
    <property type="match status" value="1"/>
</dbReference>
<reference key="1">
    <citation type="journal article" date="2010" name="Environ. Microbiol.">
        <title>The genome of Syntrophomonas wolfei: new insights into syntrophic metabolism and biohydrogen production.</title>
        <authorList>
            <person name="Sieber J.R."/>
            <person name="Sims D.R."/>
            <person name="Han C."/>
            <person name="Kim E."/>
            <person name="Lykidis A."/>
            <person name="Lapidus A.L."/>
            <person name="McDonnald E."/>
            <person name="Rohlin L."/>
            <person name="Culley D.E."/>
            <person name="Gunsalus R."/>
            <person name="McInerney M.J."/>
        </authorList>
    </citation>
    <scope>NUCLEOTIDE SEQUENCE [LARGE SCALE GENOMIC DNA]</scope>
    <source>
        <strain>DSM 2245B / Goettingen</strain>
    </source>
</reference>
<name>PANB_SYNWW</name>
<comment type="function">
    <text evidence="1">Catalyzes the reversible reaction in which hydroxymethyl group from 5,10-methylenetetrahydrofolate is transferred onto alpha-ketoisovalerate to form ketopantoate.</text>
</comment>
<comment type="catalytic activity">
    <reaction evidence="1">
        <text>3-methyl-2-oxobutanoate + (6R)-5,10-methylene-5,6,7,8-tetrahydrofolate + H2O = 2-dehydropantoate + (6S)-5,6,7,8-tetrahydrofolate</text>
        <dbReference type="Rhea" id="RHEA:11824"/>
        <dbReference type="ChEBI" id="CHEBI:11561"/>
        <dbReference type="ChEBI" id="CHEBI:11851"/>
        <dbReference type="ChEBI" id="CHEBI:15377"/>
        <dbReference type="ChEBI" id="CHEBI:15636"/>
        <dbReference type="ChEBI" id="CHEBI:57453"/>
        <dbReference type="EC" id="2.1.2.11"/>
    </reaction>
</comment>
<comment type="cofactor">
    <cofactor evidence="1">
        <name>Mg(2+)</name>
        <dbReference type="ChEBI" id="CHEBI:18420"/>
    </cofactor>
    <text evidence="1">Binds 1 Mg(2+) ion per subunit.</text>
</comment>
<comment type="pathway">
    <text evidence="1">Cofactor biosynthesis; (R)-pantothenate biosynthesis; (R)-pantoate from 3-methyl-2-oxobutanoate: step 1/2.</text>
</comment>
<comment type="subunit">
    <text evidence="1">Homodecamer; pentamer of dimers.</text>
</comment>
<comment type="subcellular location">
    <subcellularLocation>
        <location evidence="1">Cytoplasm</location>
    </subcellularLocation>
</comment>
<comment type="similarity">
    <text evidence="1">Belongs to the PanB family.</text>
</comment>
<protein>
    <recommendedName>
        <fullName evidence="1">3-methyl-2-oxobutanoate hydroxymethyltransferase</fullName>
        <ecNumber evidence="1">2.1.2.11</ecNumber>
    </recommendedName>
    <alternativeName>
        <fullName evidence="1">Ketopantoate hydroxymethyltransferase</fullName>
        <shortName evidence="1">KPHMT</shortName>
    </alternativeName>
</protein>